<dbReference type="EC" id="2.3.1.15" evidence="1"/>
<dbReference type="EMBL" id="CP000681">
    <property type="protein sequence ID" value="ABP77486.1"/>
    <property type="molecule type" value="Genomic_DNA"/>
</dbReference>
<dbReference type="SMR" id="A4YC03"/>
<dbReference type="STRING" id="319224.Sputcn32_3779"/>
<dbReference type="KEGG" id="spc:Sputcn32_3779"/>
<dbReference type="eggNOG" id="COG2937">
    <property type="taxonomic scope" value="Bacteria"/>
</dbReference>
<dbReference type="HOGENOM" id="CLU_015407_0_0_6"/>
<dbReference type="UniPathway" id="UPA00557">
    <property type="reaction ID" value="UER00612"/>
</dbReference>
<dbReference type="GO" id="GO:0005886">
    <property type="term" value="C:plasma membrane"/>
    <property type="evidence" value="ECO:0007669"/>
    <property type="project" value="UniProtKB-SubCell"/>
</dbReference>
<dbReference type="GO" id="GO:0004366">
    <property type="term" value="F:glycerol-3-phosphate O-acyltransferase activity"/>
    <property type="evidence" value="ECO:0007669"/>
    <property type="project" value="UniProtKB-UniRule"/>
</dbReference>
<dbReference type="GO" id="GO:0016024">
    <property type="term" value="P:CDP-diacylglycerol biosynthetic process"/>
    <property type="evidence" value="ECO:0007669"/>
    <property type="project" value="UniProtKB-UniRule"/>
</dbReference>
<dbReference type="GO" id="GO:0006631">
    <property type="term" value="P:fatty acid metabolic process"/>
    <property type="evidence" value="ECO:0007669"/>
    <property type="project" value="TreeGrafter"/>
</dbReference>
<dbReference type="CDD" id="cd07993">
    <property type="entry name" value="LPLAT_DHAPAT-like"/>
    <property type="match status" value="1"/>
</dbReference>
<dbReference type="HAMAP" id="MF_00393">
    <property type="entry name" value="Glyc3P_acyltrans"/>
    <property type="match status" value="1"/>
</dbReference>
<dbReference type="InterPro" id="IPR022284">
    <property type="entry name" value="GPAT/DHAPAT"/>
</dbReference>
<dbReference type="InterPro" id="IPR045520">
    <property type="entry name" value="GPAT/DHAPAT_C"/>
</dbReference>
<dbReference type="InterPro" id="IPR041728">
    <property type="entry name" value="GPAT/DHAPAT_LPLAT"/>
</dbReference>
<dbReference type="InterPro" id="IPR028354">
    <property type="entry name" value="GPAT_PlsB"/>
</dbReference>
<dbReference type="InterPro" id="IPR002123">
    <property type="entry name" value="Plipid/glycerol_acylTrfase"/>
</dbReference>
<dbReference type="NCBIfam" id="TIGR03703">
    <property type="entry name" value="plsB"/>
    <property type="match status" value="1"/>
</dbReference>
<dbReference type="NCBIfam" id="NF003441">
    <property type="entry name" value="PRK04974.1"/>
    <property type="match status" value="1"/>
</dbReference>
<dbReference type="PANTHER" id="PTHR12563:SF17">
    <property type="entry name" value="DIHYDROXYACETONE PHOSPHATE ACYLTRANSFERASE"/>
    <property type="match status" value="1"/>
</dbReference>
<dbReference type="PANTHER" id="PTHR12563">
    <property type="entry name" value="GLYCEROL-3-PHOSPHATE ACYLTRANSFERASE"/>
    <property type="match status" value="1"/>
</dbReference>
<dbReference type="Pfam" id="PF01553">
    <property type="entry name" value="Acyltransferase"/>
    <property type="match status" value="1"/>
</dbReference>
<dbReference type="Pfam" id="PF19277">
    <property type="entry name" value="GPAT_C"/>
    <property type="match status" value="1"/>
</dbReference>
<dbReference type="PIRSF" id="PIRSF500064">
    <property type="entry name" value="GPAT"/>
    <property type="match status" value="1"/>
</dbReference>
<dbReference type="PIRSF" id="PIRSF000437">
    <property type="entry name" value="GPAT_DHAPAT"/>
    <property type="match status" value="1"/>
</dbReference>
<dbReference type="SMART" id="SM00563">
    <property type="entry name" value="PlsC"/>
    <property type="match status" value="1"/>
</dbReference>
<dbReference type="SUPFAM" id="SSF69593">
    <property type="entry name" value="Glycerol-3-phosphate (1)-acyltransferase"/>
    <property type="match status" value="1"/>
</dbReference>
<sequence length="807" mass="91358">MPKQDSLWLKSLRWIQKHLVHTIVVPQDPFADLNLDTSRPLAYVMKTESLSDIAALSEVTEKLGLPSPYEPLVVNGVVAPRVVCLQGRKPLFGERAGNEPFLECFMRLLAVHKERPELDIQLVPVSLYWGRTPGKEDDTMKAAVLERENPTWLRKCFMILFLGRHNFVQFSNAVSLRYMADEHGTDMGIAHKLARVARVHFRRQRKVMTGPLLPNRQALFDSLLKSESLRKAIQEEAVSKKISETQARETAIEYLDEIAANYSDSLVRIAERFLTWLWNKLYSGINIKGAEHIRQLHHDGHEIVYVPCHRSHMDYLLLSYILYYQGMVPPHIAAGINLNFWPAGPLFRRGGAFFIRRSFNGNKLYTAVFREYLDQLFAKGYSVEYFSEGGRSRTGRLLAPKTGMIAMTMNSVLRGIERPVTLVPVYLGYDHVMEVATYHKELSGKKKQKESVWQVFGAIRKLGNFGQGYVNFGEPITLQTFLNEMAPNWRAELADDPEQKPTWLTPAVNVLANRVMTRINDAAAASSVTLTSLALLASEQNALERCLLERQLDLYLTLLKRVPYTSFTSVAEGDGKHLVQQGINLNKFSVSSDPLGEIVSIDANQAISMTYYRNNIIHLFIIPSLIASCLTHNEQSQRQQIVAIVNDFYPLLKAELFMGIKDIPSYVNQVLDLFIEQGLITESDNLSVVTEHSSQLVLLSGSVSETLQRYAIIFNLLAHRPKMERSELESESHLLAQRLGALHGITAPEFYDKKLYGTLSVKLKELGYLSDKDDKSDVKRIRDQANSLLRASVRQTIVASVTAEHIS</sequence>
<evidence type="ECO:0000255" key="1">
    <source>
        <dbReference type="HAMAP-Rule" id="MF_00393"/>
    </source>
</evidence>
<protein>
    <recommendedName>
        <fullName evidence="1">Glycerol-3-phosphate acyltransferase</fullName>
        <shortName evidence="1">GPAT</shortName>
        <ecNumber evidence="1">2.3.1.15</ecNumber>
    </recommendedName>
</protein>
<organism>
    <name type="scientific">Shewanella putrefaciens (strain CN-32 / ATCC BAA-453)</name>
    <dbReference type="NCBI Taxonomy" id="319224"/>
    <lineage>
        <taxon>Bacteria</taxon>
        <taxon>Pseudomonadati</taxon>
        <taxon>Pseudomonadota</taxon>
        <taxon>Gammaproteobacteria</taxon>
        <taxon>Alteromonadales</taxon>
        <taxon>Shewanellaceae</taxon>
        <taxon>Shewanella</taxon>
    </lineage>
</organism>
<name>PLSB_SHEPC</name>
<proteinExistence type="inferred from homology"/>
<comment type="catalytic activity">
    <reaction evidence="1">
        <text>sn-glycerol 3-phosphate + an acyl-CoA = a 1-acyl-sn-glycero-3-phosphate + CoA</text>
        <dbReference type="Rhea" id="RHEA:15325"/>
        <dbReference type="ChEBI" id="CHEBI:57287"/>
        <dbReference type="ChEBI" id="CHEBI:57597"/>
        <dbReference type="ChEBI" id="CHEBI:57970"/>
        <dbReference type="ChEBI" id="CHEBI:58342"/>
        <dbReference type="EC" id="2.3.1.15"/>
    </reaction>
</comment>
<comment type="pathway">
    <text evidence="1">Phospholipid metabolism; CDP-diacylglycerol biosynthesis; CDP-diacylglycerol from sn-glycerol 3-phosphate: step 1/3.</text>
</comment>
<comment type="subcellular location">
    <subcellularLocation>
        <location evidence="1">Cell inner membrane</location>
        <topology evidence="1">Peripheral membrane protein</topology>
        <orientation evidence="1">Cytoplasmic side</orientation>
    </subcellularLocation>
</comment>
<comment type="domain">
    <text evidence="1">The HXXXXD motif is essential for acyltransferase activity and may constitute the binding site for the phosphate moiety of the glycerol-3-phosphate.</text>
</comment>
<comment type="similarity">
    <text evidence="1">Belongs to the GPAT/DAPAT family.</text>
</comment>
<keyword id="KW-0012">Acyltransferase</keyword>
<keyword id="KW-0997">Cell inner membrane</keyword>
<keyword id="KW-1003">Cell membrane</keyword>
<keyword id="KW-0444">Lipid biosynthesis</keyword>
<keyword id="KW-0443">Lipid metabolism</keyword>
<keyword id="KW-0472">Membrane</keyword>
<keyword id="KW-0594">Phospholipid biosynthesis</keyword>
<keyword id="KW-1208">Phospholipid metabolism</keyword>
<keyword id="KW-0808">Transferase</keyword>
<accession>A4YC03</accession>
<feature type="chain" id="PRO_1000049459" description="Glycerol-3-phosphate acyltransferase">
    <location>
        <begin position="1"/>
        <end position="807"/>
    </location>
</feature>
<feature type="short sequence motif" description="HXXXXD motif">
    <location>
        <begin position="308"/>
        <end position="313"/>
    </location>
</feature>
<gene>
    <name evidence="1" type="primary">plsB</name>
    <name type="ordered locus">Sputcn32_3779</name>
</gene>
<reference key="1">
    <citation type="submission" date="2007-04" db="EMBL/GenBank/DDBJ databases">
        <title>Complete sequence of Shewanella putrefaciens CN-32.</title>
        <authorList>
            <consortium name="US DOE Joint Genome Institute"/>
            <person name="Copeland A."/>
            <person name="Lucas S."/>
            <person name="Lapidus A."/>
            <person name="Barry K."/>
            <person name="Detter J.C."/>
            <person name="Glavina del Rio T."/>
            <person name="Hammon N."/>
            <person name="Israni S."/>
            <person name="Dalin E."/>
            <person name="Tice H."/>
            <person name="Pitluck S."/>
            <person name="Chain P."/>
            <person name="Malfatti S."/>
            <person name="Shin M."/>
            <person name="Vergez L."/>
            <person name="Schmutz J."/>
            <person name="Larimer F."/>
            <person name="Land M."/>
            <person name="Hauser L."/>
            <person name="Kyrpides N."/>
            <person name="Mikhailova N."/>
            <person name="Romine M.F."/>
            <person name="Fredrickson J."/>
            <person name="Tiedje J."/>
            <person name="Richardson P."/>
        </authorList>
    </citation>
    <scope>NUCLEOTIDE SEQUENCE [LARGE SCALE GENOMIC DNA]</scope>
    <source>
        <strain>CN-32 / ATCC BAA-453</strain>
    </source>
</reference>